<dbReference type="EMBL" id="CR760798">
    <property type="protein sequence ID" value="CAJ82909.1"/>
    <property type="molecule type" value="mRNA"/>
</dbReference>
<dbReference type="EMBL" id="BC076916">
    <property type="protein sequence ID" value="AAH76916.1"/>
    <property type="molecule type" value="mRNA"/>
</dbReference>
<dbReference type="RefSeq" id="NP_001005047.1">
    <property type="nucleotide sequence ID" value="NM_001005047.1"/>
</dbReference>
<dbReference type="SMR" id="Q6DF27"/>
<dbReference type="FunCoup" id="Q6DF27">
    <property type="interactions" value="1489"/>
</dbReference>
<dbReference type="STRING" id="8364.ENSXETP00000041463"/>
<dbReference type="PaxDb" id="8364-ENSXETP00000047854"/>
<dbReference type="DNASU" id="448582"/>
<dbReference type="GeneID" id="448582"/>
<dbReference type="KEGG" id="xtr:448582"/>
<dbReference type="AGR" id="Xenbase:XB-GENE-5822036"/>
<dbReference type="CTD" id="57132"/>
<dbReference type="Xenbase" id="XB-GENE-5822036">
    <property type="gene designation" value="chmp1b"/>
</dbReference>
<dbReference type="eggNOG" id="KOG3232">
    <property type="taxonomic scope" value="Eukaryota"/>
</dbReference>
<dbReference type="HOGENOM" id="CLU_080826_0_1_1"/>
<dbReference type="InParanoid" id="Q6DF27"/>
<dbReference type="OMA" id="QQITMVM"/>
<dbReference type="OrthoDB" id="10266568at2759"/>
<dbReference type="Proteomes" id="UP000008143">
    <property type="component" value="Chromosome 8"/>
</dbReference>
<dbReference type="Bgee" id="ENSXETG00000022122">
    <property type="expression patterns" value="Expressed in ovary and 17 other cell types or tissues"/>
</dbReference>
<dbReference type="GO" id="GO:0005829">
    <property type="term" value="C:cytosol"/>
    <property type="evidence" value="ECO:0007669"/>
    <property type="project" value="UniProtKB-SubCell"/>
</dbReference>
<dbReference type="GO" id="GO:0031902">
    <property type="term" value="C:late endosome membrane"/>
    <property type="evidence" value="ECO:0007669"/>
    <property type="project" value="UniProtKB-SubCell"/>
</dbReference>
<dbReference type="GO" id="GO:0015031">
    <property type="term" value="P:protein transport"/>
    <property type="evidence" value="ECO:0007669"/>
    <property type="project" value="UniProtKB-KW"/>
</dbReference>
<dbReference type="GO" id="GO:0007034">
    <property type="term" value="P:vacuolar transport"/>
    <property type="evidence" value="ECO:0007669"/>
    <property type="project" value="InterPro"/>
</dbReference>
<dbReference type="Gene3D" id="6.10.140.1230">
    <property type="match status" value="1"/>
</dbReference>
<dbReference type="InterPro" id="IPR005024">
    <property type="entry name" value="Snf7_fam"/>
</dbReference>
<dbReference type="PANTHER" id="PTHR10476">
    <property type="entry name" value="CHARGED MULTIVESICULAR BODY PROTEIN"/>
    <property type="match status" value="1"/>
</dbReference>
<dbReference type="Pfam" id="PF03357">
    <property type="entry name" value="Snf7"/>
    <property type="match status" value="1"/>
</dbReference>
<accession>Q6DF27</accession>
<accession>Q28HP5</accession>
<comment type="function">
    <text>Probable peripherally associated component of the endosomal sorting required for transport complex III (ESCRT-III) which is involved in multivesicular bodies (MVBs) formation and sorting of endosomal cargo proteins into MVBs. MVBs contain intraluminal vesicles (ILVs) that are generated by invagination and scission from the limiting membrane of the endosome and mostly are delivered to lysosomes enabling degradation of membrane proteins, such as stimulated growth factor receptors, lysosomal enzymes and lipids.</text>
</comment>
<comment type="subcellular location">
    <subcellularLocation>
        <location evidence="1">Cytoplasm</location>
        <location evidence="1">Cytosol</location>
    </subcellularLocation>
    <subcellularLocation>
        <location evidence="1">Endosome</location>
    </subcellularLocation>
    <subcellularLocation>
        <location evidence="1">Late endosome membrane</location>
        <topology evidence="1">Peripheral membrane protein</topology>
    </subcellularLocation>
</comment>
<comment type="similarity">
    <text evidence="4">Belongs to the SNF7 family.</text>
</comment>
<proteinExistence type="evidence at transcript level"/>
<feature type="chain" id="PRO_0000211460" description="Charged multivesicular body protein 1b">
    <location>
        <begin position="1"/>
        <end position="199"/>
    </location>
</feature>
<feature type="region of interest" description="Disordered" evidence="3">
    <location>
        <begin position="167"/>
        <end position="199"/>
    </location>
</feature>
<feature type="coiled-coil region" evidence="2">
    <location>
        <begin position="15"/>
        <end position="42"/>
    </location>
</feature>
<feature type="coiled-coil region" evidence="2">
    <location>
        <begin position="178"/>
        <end position="199"/>
    </location>
</feature>
<feature type="short sequence motif" description="MIT-interacting motif">
    <location>
        <begin position="186"/>
        <end position="196"/>
    </location>
</feature>
<feature type="compositionally biased region" description="Polar residues" evidence="3">
    <location>
        <begin position="170"/>
        <end position="183"/>
    </location>
</feature>
<gene>
    <name type="primary">chmp1b</name>
    <name type="ORF">TTpA009p13.1</name>
</gene>
<evidence type="ECO:0000250" key="1"/>
<evidence type="ECO:0000255" key="2"/>
<evidence type="ECO:0000256" key="3">
    <source>
        <dbReference type="SAM" id="MobiDB-lite"/>
    </source>
</evidence>
<evidence type="ECO:0000305" key="4"/>
<keyword id="KW-0175">Coiled coil</keyword>
<keyword id="KW-0963">Cytoplasm</keyword>
<keyword id="KW-0967">Endosome</keyword>
<keyword id="KW-0472">Membrane</keyword>
<keyword id="KW-0653">Protein transport</keyword>
<keyword id="KW-1185">Reference proteome</keyword>
<keyword id="KW-0813">Transport</keyword>
<name>CHM1B_XENTR</name>
<sequence length="199" mass="22229">MSSMEKNLFNLKFAAKELHRNAKKCEKEEKTEKAKIKKAIQKGNTEIARIHAENAIRQKNQGINFLRMSARVDAVAARVQTAVTMGKVTKSMAGVVKSMDTTLKSMNLEKISALMDKFEHQFETLDVQTQQMEDTMSNTTTLTTPQNQVDNLLHEMADEAGLDLNMELPQGQTGSVGTSVASTEQDELSQRLARLRDQV</sequence>
<protein>
    <recommendedName>
        <fullName>Charged multivesicular body protein 1b</fullName>
    </recommendedName>
    <alternativeName>
        <fullName>Chromatin-modifying protein 1b</fullName>
        <shortName>CHMP1b</shortName>
    </alternativeName>
</protein>
<organism>
    <name type="scientific">Xenopus tropicalis</name>
    <name type="common">Western clawed frog</name>
    <name type="synonym">Silurana tropicalis</name>
    <dbReference type="NCBI Taxonomy" id="8364"/>
    <lineage>
        <taxon>Eukaryota</taxon>
        <taxon>Metazoa</taxon>
        <taxon>Chordata</taxon>
        <taxon>Craniata</taxon>
        <taxon>Vertebrata</taxon>
        <taxon>Euteleostomi</taxon>
        <taxon>Amphibia</taxon>
        <taxon>Batrachia</taxon>
        <taxon>Anura</taxon>
        <taxon>Pipoidea</taxon>
        <taxon>Pipidae</taxon>
        <taxon>Xenopodinae</taxon>
        <taxon>Xenopus</taxon>
        <taxon>Silurana</taxon>
    </lineage>
</organism>
<reference key="1">
    <citation type="submission" date="2006-03" db="EMBL/GenBank/DDBJ databases">
        <authorList>
            <consortium name="Sanger Xenopus tropicalis EST/cDNA project"/>
        </authorList>
    </citation>
    <scope>NUCLEOTIDE SEQUENCE [LARGE SCALE MRNA]</scope>
    <source>
        <tissue>Tadpole</tissue>
    </source>
</reference>
<reference key="2">
    <citation type="submission" date="2004-07" db="EMBL/GenBank/DDBJ databases">
        <authorList>
            <consortium name="NIH - Xenopus Gene Collection (XGC) project"/>
        </authorList>
    </citation>
    <scope>NUCLEOTIDE SEQUENCE [LARGE SCALE MRNA]</scope>
</reference>